<feature type="chain" id="PRO_0000086710" description="SRSF protein kinase 3">
    <location>
        <begin position="1"/>
        <end position="565"/>
    </location>
</feature>
<feature type="domain" description="Protein kinase" evidence="2">
    <location>
        <begin position="78"/>
        <end position="563"/>
    </location>
</feature>
<feature type="region of interest" description="Disordered" evidence="4">
    <location>
        <begin position="1"/>
        <end position="44"/>
    </location>
</feature>
<feature type="region of interest" description="Disordered" evidence="4">
    <location>
        <begin position="236"/>
        <end position="280"/>
    </location>
</feature>
<feature type="region of interest" description="Disordered" evidence="4">
    <location>
        <begin position="295"/>
        <end position="350"/>
    </location>
</feature>
<feature type="compositionally biased region" description="Low complexity" evidence="4">
    <location>
        <begin position="10"/>
        <end position="31"/>
    </location>
</feature>
<feature type="compositionally biased region" description="Polar residues" evidence="4">
    <location>
        <begin position="236"/>
        <end position="253"/>
    </location>
</feature>
<feature type="compositionally biased region" description="Basic residues" evidence="4">
    <location>
        <begin position="262"/>
        <end position="277"/>
    </location>
</feature>
<feature type="compositionally biased region" description="Low complexity" evidence="4">
    <location>
        <begin position="325"/>
        <end position="350"/>
    </location>
</feature>
<feature type="active site" description="Proton acceptor" evidence="2 3">
    <location>
        <position position="211"/>
    </location>
</feature>
<feature type="binding site" evidence="2">
    <location>
        <begin position="84"/>
        <end position="92"/>
    </location>
    <ligand>
        <name>ATP</name>
        <dbReference type="ChEBI" id="CHEBI:30616"/>
    </ligand>
</feature>
<feature type="binding site" evidence="2">
    <location>
        <position position="107"/>
    </location>
    <ligand>
        <name>ATP</name>
        <dbReference type="ChEBI" id="CHEBI:30616"/>
    </ligand>
</feature>
<feature type="modified residue" description="Phosphoserine" evidence="7">
    <location>
        <position position="49"/>
    </location>
</feature>
<feature type="modified residue" description="Phosphoserine" evidence="7">
    <location>
        <position position="328"/>
    </location>
</feature>
<evidence type="ECO:0000250" key="1">
    <source>
        <dbReference type="UniProtKB" id="Q9UPE1"/>
    </source>
</evidence>
<evidence type="ECO:0000255" key="2">
    <source>
        <dbReference type="PROSITE-ProRule" id="PRU00159"/>
    </source>
</evidence>
<evidence type="ECO:0000255" key="3">
    <source>
        <dbReference type="PROSITE-ProRule" id="PRU10027"/>
    </source>
</evidence>
<evidence type="ECO:0000256" key="4">
    <source>
        <dbReference type="SAM" id="MobiDB-lite"/>
    </source>
</evidence>
<evidence type="ECO:0000269" key="5">
    <source>
    </source>
</evidence>
<evidence type="ECO:0000305" key="6"/>
<evidence type="ECO:0007744" key="7">
    <source>
    </source>
</evidence>
<protein>
    <recommendedName>
        <fullName>SRSF protein kinase 3</fullName>
        <ecNumber>2.7.11.1</ecNumber>
    </recommendedName>
    <alternativeName>
        <fullName>Muscle-specific serine kinase 1</fullName>
        <shortName>MSSK-1</shortName>
    </alternativeName>
    <alternativeName>
        <fullName>Serine/arginine-rich protein-specific kinase 3</fullName>
        <shortName>SR-protein-specific kinase 3</shortName>
    </alternativeName>
    <alternativeName>
        <fullName>Serine/threonine-protein kinase 23</fullName>
    </alternativeName>
</protein>
<accession>Q9Z0G2</accession>
<organism>
    <name type="scientific">Mus musculus</name>
    <name type="common">Mouse</name>
    <dbReference type="NCBI Taxonomy" id="10090"/>
    <lineage>
        <taxon>Eukaryota</taxon>
        <taxon>Metazoa</taxon>
        <taxon>Chordata</taxon>
        <taxon>Craniata</taxon>
        <taxon>Vertebrata</taxon>
        <taxon>Euteleostomi</taxon>
        <taxon>Mammalia</taxon>
        <taxon>Eutheria</taxon>
        <taxon>Euarchontoglires</taxon>
        <taxon>Glires</taxon>
        <taxon>Rodentia</taxon>
        <taxon>Myomorpha</taxon>
        <taxon>Muroidea</taxon>
        <taxon>Muridae</taxon>
        <taxon>Murinae</taxon>
        <taxon>Mus</taxon>
        <taxon>Mus</taxon>
    </lineage>
</organism>
<dbReference type="EC" id="2.7.11.1"/>
<dbReference type="EMBL" id="AF043289">
    <property type="protein sequence ID" value="AAD02248.1"/>
    <property type="molecule type" value="Genomic_DNA"/>
</dbReference>
<dbReference type="EMBL" id="AF043288">
    <property type="protein sequence ID" value="AAD02247.1"/>
    <property type="molecule type" value="mRNA"/>
</dbReference>
<dbReference type="EMBL" id="AF133093">
    <property type="status" value="NOT_ANNOTATED_CDS"/>
    <property type="molecule type" value="Genomic_DNA"/>
</dbReference>
<dbReference type="CCDS" id="CCDS30211.1"/>
<dbReference type="RefSeq" id="NP_062658.1">
    <property type="nucleotide sequence ID" value="NM_019684.2"/>
</dbReference>
<dbReference type="SMR" id="Q9Z0G2"/>
<dbReference type="BioGRID" id="208023">
    <property type="interactions" value="1"/>
</dbReference>
<dbReference type="FunCoup" id="Q9Z0G2">
    <property type="interactions" value="1105"/>
</dbReference>
<dbReference type="STRING" id="10090.ENSMUSP00000002081"/>
<dbReference type="GlyGen" id="Q9Z0G2">
    <property type="glycosylation" value="1 site, 1 O-linked glycan (1 site)"/>
</dbReference>
<dbReference type="iPTMnet" id="Q9Z0G2"/>
<dbReference type="PhosphoSitePlus" id="Q9Z0G2"/>
<dbReference type="PaxDb" id="10090-ENSMUSP00000002081"/>
<dbReference type="ProteomicsDB" id="263347"/>
<dbReference type="Antibodypedia" id="30953">
    <property type="antibodies" value="165 antibodies from 26 providers"/>
</dbReference>
<dbReference type="DNASU" id="56504"/>
<dbReference type="Ensembl" id="ENSMUST00000002081.6">
    <property type="protein sequence ID" value="ENSMUSP00000002081.6"/>
    <property type="gene ID" value="ENSMUSG00000002007.6"/>
</dbReference>
<dbReference type="GeneID" id="56504"/>
<dbReference type="KEGG" id="mmu:56504"/>
<dbReference type="UCSC" id="uc009tmo.1">
    <property type="organism name" value="mouse"/>
</dbReference>
<dbReference type="AGR" id="MGI:1891338"/>
<dbReference type="CTD" id="26576"/>
<dbReference type="MGI" id="MGI:1891338">
    <property type="gene designation" value="Srpk3"/>
</dbReference>
<dbReference type="VEuPathDB" id="HostDB:ENSMUSG00000002007"/>
<dbReference type="eggNOG" id="KOG1290">
    <property type="taxonomic scope" value="Eukaryota"/>
</dbReference>
<dbReference type="GeneTree" id="ENSGT00940000157877"/>
<dbReference type="HOGENOM" id="CLU_000288_81_9_1"/>
<dbReference type="InParanoid" id="Q9Z0G2"/>
<dbReference type="OMA" id="MDNVTLC"/>
<dbReference type="OrthoDB" id="2649at2759"/>
<dbReference type="PhylomeDB" id="Q9Z0G2"/>
<dbReference type="TreeFam" id="TF105334"/>
<dbReference type="BioGRID-ORCS" id="56504">
    <property type="hits" value="2 hits in 80 CRISPR screens"/>
</dbReference>
<dbReference type="PRO" id="PR:Q9Z0G2"/>
<dbReference type="Proteomes" id="UP000000589">
    <property type="component" value="Chromosome X"/>
</dbReference>
<dbReference type="RNAct" id="Q9Z0G2">
    <property type="molecule type" value="protein"/>
</dbReference>
<dbReference type="Bgee" id="ENSMUSG00000002007">
    <property type="expression patterns" value="Expressed in temporalis muscle and 148 other cell types or tissues"/>
</dbReference>
<dbReference type="ExpressionAtlas" id="Q9Z0G2">
    <property type="expression patterns" value="baseline and differential"/>
</dbReference>
<dbReference type="GO" id="GO:0005737">
    <property type="term" value="C:cytoplasm"/>
    <property type="evidence" value="ECO:0000250"/>
    <property type="project" value="UniProtKB"/>
</dbReference>
<dbReference type="GO" id="GO:0005634">
    <property type="term" value="C:nucleus"/>
    <property type="evidence" value="ECO:0000250"/>
    <property type="project" value="UniProtKB"/>
</dbReference>
<dbReference type="GO" id="GO:0005524">
    <property type="term" value="F:ATP binding"/>
    <property type="evidence" value="ECO:0007669"/>
    <property type="project" value="UniProtKB-KW"/>
</dbReference>
<dbReference type="GO" id="GO:0106310">
    <property type="term" value="F:protein serine kinase activity"/>
    <property type="evidence" value="ECO:0007669"/>
    <property type="project" value="RHEA"/>
</dbReference>
<dbReference type="GO" id="GO:0004674">
    <property type="term" value="F:protein serine/threonine kinase activity"/>
    <property type="evidence" value="ECO:0000314"/>
    <property type="project" value="MGI"/>
</dbReference>
<dbReference type="GO" id="GO:0030154">
    <property type="term" value="P:cell differentiation"/>
    <property type="evidence" value="ECO:0007669"/>
    <property type="project" value="UniProtKB-KW"/>
</dbReference>
<dbReference type="GO" id="GO:0060537">
    <property type="term" value="P:muscle tissue development"/>
    <property type="evidence" value="ECO:0000315"/>
    <property type="project" value="UniProtKB"/>
</dbReference>
<dbReference type="GO" id="GO:0007519">
    <property type="term" value="P:skeletal muscle tissue development"/>
    <property type="evidence" value="ECO:0000315"/>
    <property type="project" value="MGI"/>
</dbReference>
<dbReference type="CDD" id="cd14218">
    <property type="entry name" value="STKc_SRPK3"/>
    <property type="match status" value="1"/>
</dbReference>
<dbReference type="FunFam" id="1.10.510.10:FF:001095">
    <property type="entry name" value="SRPK3 isoform 3"/>
    <property type="match status" value="1"/>
</dbReference>
<dbReference type="FunFam" id="1.10.510.10:FF:000105">
    <property type="entry name" value="SRSF protein kinase 2"/>
    <property type="match status" value="1"/>
</dbReference>
<dbReference type="FunFam" id="3.30.200.20:FF:000163">
    <property type="entry name" value="SRSF protein kinase 2 isoform X1"/>
    <property type="match status" value="1"/>
</dbReference>
<dbReference type="Gene3D" id="3.30.200.20">
    <property type="entry name" value="Phosphorylase Kinase, domain 1"/>
    <property type="match status" value="1"/>
</dbReference>
<dbReference type="Gene3D" id="1.10.510.10">
    <property type="entry name" value="Transferase(Phosphotransferase) domain 1"/>
    <property type="match status" value="2"/>
</dbReference>
<dbReference type="InterPro" id="IPR011009">
    <property type="entry name" value="Kinase-like_dom_sf"/>
</dbReference>
<dbReference type="InterPro" id="IPR000719">
    <property type="entry name" value="Prot_kinase_dom"/>
</dbReference>
<dbReference type="InterPro" id="IPR017441">
    <property type="entry name" value="Protein_kinase_ATP_BS"/>
</dbReference>
<dbReference type="InterPro" id="IPR008271">
    <property type="entry name" value="Ser/Thr_kinase_AS"/>
</dbReference>
<dbReference type="InterPro" id="IPR051334">
    <property type="entry name" value="SRPK"/>
</dbReference>
<dbReference type="PANTHER" id="PTHR47634">
    <property type="entry name" value="PROTEIN KINASE DOMAIN-CONTAINING PROTEIN-RELATED"/>
    <property type="match status" value="1"/>
</dbReference>
<dbReference type="PANTHER" id="PTHR47634:SF20">
    <property type="entry name" value="SRSF PROTEIN KINASE 3"/>
    <property type="match status" value="1"/>
</dbReference>
<dbReference type="Pfam" id="PF00069">
    <property type="entry name" value="Pkinase"/>
    <property type="match status" value="2"/>
</dbReference>
<dbReference type="SMART" id="SM00220">
    <property type="entry name" value="S_TKc"/>
    <property type="match status" value="1"/>
</dbReference>
<dbReference type="SUPFAM" id="SSF56112">
    <property type="entry name" value="Protein kinase-like (PK-like)"/>
    <property type="match status" value="1"/>
</dbReference>
<dbReference type="PROSITE" id="PS00107">
    <property type="entry name" value="PROTEIN_KINASE_ATP"/>
    <property type="match status" value="1"/>
</dbReference>
<dbReference type="PROSITE" id="PS50011">
    <property type="entry name" value="PROTEIN_KINASE_DOM"/>
    <property type="match status" value="1"/>
</dbReference>
<dbReference type="PROSITE" id="PS00108">
    <property type="entry name" value="PROTEIN_KINASE_ST"/>
    <property type="match status" value="1"/>
</dbReference>
<comment type="function">
    <text evidence="5">Serine/arginine-rich protein-specific kinase which specifically phosphorylates its substrates at serine residues located in regions rich in arginine/serine dipeptides, known as RS domains. Phosphorylates the SR splicing factor SRSF1 and the lamin-B receptor (LBR) in vitro. Required for normal muscle development.</text>
</comment>
<comment type="catalytic activity">
    <reaction>
        <text>L-seryl-[protein] + ATP = O-phospho-L-seryl-[protein] + ADP + H(+)</text>
        <dbReference type="Rhea" id="RHEA:17989"/>
        <dbReference type="Rhea" id="RHEA-COMP:9863"/>
        <dbReference type="Rhea" id="RHEA-COMP:11604"/>
        <dbReference type="ChEBI" id="CHEBI:15378"/>
        <dbReference type="ChEBI" id="CHEBI:29999"/>
        <dbReference type="ChEBI" id="CHEBI:30616"/>
        <dbReference type="ChEBI" id="CHEBI:83421"/>
        <dbReference type="ChEBI" id="CHEBI:456216"/>
        <dbReference type="EC" id="2.7.11.1"/>
    </reaction>
</comment>
<comment type="catalytic activity">
    <reaction>
        <text>L-threonyl-[protein] + ATP = O-phospho-L-threonyl-[protein] + ADP + H(+)</text>
        <dbReference type="Rhea" id="RHEA:46608"/>
        <dbReference type="Rhea" id="RHEA-COMP:11060"/>
        <dbReference type="Rhea" id="RHEA-COMP:11605"/>
        <dbReference type="ChEBI" id="CHEBI:15378"/>
        <dbReference type="ChEBI" id="CHEBI:30013"/>
        <dbReference type="ChEBI" id="CHEBI:30616"/>
        <dbReference type="ChEBI" id="CHEBI:61977"/>
        <dbReference type="ChEBI" id="CHEBI:456216"/>
        <dbReference type="EC" id="2.7.11.1"/>
    </reaction>
</comment>
<comment type="subcellular location">
    <subcellularLocation>
        <location evidence="1">Nucleus</location>
    </subcellularLocation>
    <subcellularLocation>
        <location evidence="1">Cytoplasm</location>
    </subcellularLocation>
</comment>
<comment type="tissue specificity">
    <text evidence="5">Exclusively expressed in skeletal and heart muscle.</text>
</comment>
<comment type="developmental stage">
    <text evidence="5">Expressed from embryogenesis to adulthood.</text>
</comment>
<comment type="disruption phenotype">
    <text evidence="5">Mice are viable to adulthood but display defects in skeletal muscle growth including reduced muscle mass, marked increase in centrally placed nuclei and disorganized intermyofibrillar network.</text>
</comment>
<comment type="similarity">
    <text evidence="6">Belongs to the protein kinase superfamily. CMGC Ser/Thr protein kinase family.</text>
</comment>
<proteinExistence type="evidence at protein level"/>
<name>SRPK3_MOUSE</name>
<reference key="1">
    <citation type="submission" date="1998-01" db="EMBL/GenBank/DDBJ databases">
        <title>Cloning and sequencing of a new muscle-specific serine kinase gene in human and mouse.</title>
        <authorList>
            <person name="Brenner V."/>
            <person name="Rosenthal A."/>
        </authorList>
    </citation>
    <scope>NUCLEOTIDE SEQUENCE [GENOMIC DNA / MRNA]</scope>
    <source>
        <tissue>Muscle</tissue>
    </source>
</reference>
<reference key="2">
    <citation type="submission" date="1999-03" db="EMBL/GenBank/DDBJ databases">
        <title>Comparative sequence analysis of the mouse L1cam locus and the corresponding region of human Xq28.</title>
        <authorList>
            <person name="Platzer M."/>
            <person name="Brenner V."/>
            <person name="Reichwald K."/>
            <person name="Wiehe T."/>
            <person name="Oksche A."/>
            <person name="Rosenthal A."/>
        </authorList>
    </citation>
    <scope>NUCLEOTIDE SEQUENCE [GENOMIC DNA]</scope>
</reference>
<reference key="3">
    <citation type="journal article" date="2005" name="Genes Dev.">
        <title>Centronuclear myopathy in mice lacking a novel muscle-specific protein kinase transcriptionally regulated by MEF2.</title>
        <authorList>
            <person name="Nakagawa O."/>
            <person name="Arnold M."/>
            <person name="Nakagawa M."/>
            <person name="Hamada H."/>
            <person name="Shelton J.M."/>
            <person name="Kusano H."/>
            <person name="Harris T.M."/>
            <person name="Childs G."/>
            <person name="Campbell K.P."/>
            <person name="Richardson J.A."/>
            <person name="Nishino I."/>
            <person name="Olson E.N."/>
        </authorList>
    </citation>
    <scope>FUNCTION</scope>
    <scope>TISSUE SPECIFICITY</scope>
    <scope>DEVELOPMENTAL STAGE</scope>
    <scope>DISRUPTION PHENOTYPE</scope>
</reference>
<reference key="4">
    <citation type="journal article" date="2010" name="Cell">
        <title>A tissue-specific atlas of mouse protein phosphorylation and expression.</title>
        <authorList>
            <person name="Huttlin E.L."/>
            <person name="Jedrychowski M.P."/>
            <person name="Elias J.E."/>
            <person name="Goswami T."/>
            <person name="Rad R."/>
            <person name="Beausoleil S.A."/>
            <person name="Villen J."/>
            <person name="Haas W."/>
            <person name="Sowa M.E."/>
            <person name="Gygi S.P."/>
        </authorList>
    </citation>
    <scope>PHOSPHORYLATION [LARGE SCALE ANALYSIS] AT SER-49 AND SER-328</scope>
    <scope>IDENTIFICATION BY MASS SPECTROMETRY [LARGE SCALE ANALYSIS]</scope>
    <source>
        <tissue>Brown adipose tissue</tissue>
        <tissue>Heart</tissue>
        <tissue>Spleen</tissue>
    </source>
</reference>
<sequence length="565" mass="62365">MSANAGGSGSVDCGGSSSSSQTSCGPESSGSELTPATPAPRLLQGLLGSDDEEQEDPKDYCKGGYYPVKIGDLFNGRYHVVRKLGWGHFSTVWLCWDIQRKRFVALKVVKSAGHYTETAVDEIKLLKCVRDSDPSDPKRETIVQLIDDFRISGVNGVHVCMVLEVLGHQLLKWIIKSNYQGLPVPCVKSIVRQVLHGLDYLHTKCKIIHTDIKPENILLCVGDAYIRRLAAEATEWQQSGAQPPSRSTVSTAPQEVLIGKLSKNKRKKMRRKRKQQKRLLEERLRDLQRLEAMEAAVQAEDSSSRLERGSGSTSSSGCHPEGTRAGPSPASSSPVPGGERSLSPSSQTSGFSGSLFSTASCSILSGSSNQRETGGLLSPSTPFGASNLLVNPLEPQNADKIKIKIADLGNACWVHKHFTEDIQTRQYRAVEVLIGAEYGPPADIWSTACMAFELATGDYLFEPHSGEDYSRDEDHIAHIVELLGDIPPAFALSGRYSREFFNRRGELRHIPNLKHWGLYEVLMEKYEWPLEQATQFSAFLLPMMEYIPEKRASAADCLQHPWLNP</sequence>
<keyword id="KW-0067">ATP-binding</keyword>
<keyword id="KW-0963">Cytoplasm</keyword>
<keyword id="KW-0217">Developmental protein</keyword>
<keyword id="KW-0221">Differentiation</keyword>
<keyword id="KW-0418">Kinase</keyword>
<keyword id="KW-0517">Myogenesis</keyword>
<keyword id="KW-0547">Nucleotide-binding</keyword>
<keyword id="KW-0539">Nucleus</keyword>
<keyword id="KW-0597">Phosphoprotein</keyword>
<keyword id="KW-1185">Reference proteome</keyword>
<keyword id="KW-0723">Serine/threonine-protein kinase</keyword>
<keyword id="KW-0808">Transferase</keyword>
<gene>
    <name type="primary">Srpk3</name>
    <name type="synonym">Mssk1</name>
    <name type="synonym">Stk23</name>
</gene>